<gene>
    <name evidence="1" type="primary">surE</name>
    <name type="ordered locus">Mrad2831_2281</name>
</gene>
<keyword id="KW-0963">Cytoplasm</keyword>
<keyword id="KW-0378">Hydrolase</keyword>
<keyword id="KW-0479">Metal-binding</keyword>
<keyword id="KW-0547">Nucleotide-binding</keyword>
<protein>
    <recommendedName>
        <fullName evidence="1">5'-nucleotidase SurE</fullName>
        <ecNumber evidence="1">3.1.3.5</ecNumber>
    </recommendedName>
    <alternativeName>
        <fullName evidence="1">Nucleoside 5'-monophosphate phosphohydrolase</fullName>
    </alternativeName>
</protein>
<evidence type="ECO:0000255" key="1">
    <source>
        <dbReference type="HAMAP-Rule" id="MF_00060"/>
    </source>
</evidence>
<comment type="function">
    <text evidence="1">Nucleotidase that shows phosphatase activity on nucleoside 5'-monophosphates.</text>
</comment>
<comment type="catalytic activity">
    <reaction evidence="1">
        <text>a ribonucleoside 5'-phosphate + H2O = a ribonucleoside + phosphate</text>
        <dbReference type="Rhea" id="RHEA:12484"/>
        <dbReference type="ChEBI" id="CHEBI:15377"/>
        <dbReference type="ChEBI" id="CHEBI:18254"/>
        <dbReference type="ChEBI" id="CHEBI:43474"/>
        <dbReference type="ChEBI" id="CHEBI:58043"/>
        <dbReference type="EC" id="3.1.3.5"/>
    </reaction>
</comment>
<comment type="cofactor">
    <cofactor evidence="1">
        <name>a divalent metal cation</name>
        <dbReference type="ChEBI" id="CHEBI:60240"/>
    </cofactor>
    <text evidence="1">Binds 1 divalent metal cation per subunit.</text>
</comment>
<comment type="subcellular location">
    <subcellularLocation>
        <location evidence="1">Cytoplasm</location>
    </subcellularLocation>
</comment>
<comment type="similarity">
    <text evidence="1">Belongs to the SurE nucleotidase family.</text>
</comment>
<name>SURE_METRJ</name>
<proteinExistence type="inferred from homology"/>
<accession>B1LXR9</accession>
<dbReference type="EC" id="3.1.3.5" evidence="1"/>
<dbReference type="EMBL" id="CP001001">
    <property type="protein sequence ID" value="ACB24276.1"/>
    <property type="molecule type" value="Genomic_DNA"/>
</dbReference>
<dbReference type="RefSeq" id="WP_012319249.1">
    <property type="nucleotide sequence ID" value="NC_010505.1"/>
</dbReference>
<dbReference type="SMR" id="B1LXR9"/>
<dbReference type="STRING" id="426355.Mrad2831_2281"/>
<dbReference type="GeneID" id="6138313"/>
<dbReference type="KEGG" id="mrd:Mrad2831_2281"/>
<dbReference type="eggNOG" id="COG0496">
    <property type="taxonomic scope" value="Bacteria"/>
</dbReference>
<dbReference type="HOGENOM" id="CLU_045192_1_2_5"/>
<dbReference type="OrthoDB" id="9780815at2"/>
<dbReference type="Proteomes" id="UP000006589">
    <property type="component" value="Chromosome"/>
</dbReference>
<dbReference type="GO" id="GO:0005737">
    <property type="term" value="C:cytoplasm"/>
    <property type="evidence" value="ECO:0007669"/>
    <property type="project" value="UniProtKB-SubCell"/>
</dbReference>
<dbReference type="GO" id="GO:0008254">
    <property type="term" value="F:3'-nucleotidase activity"/>
    <property type="evidence" value="ECO:0007669"/>
    <property type="project" value="TreeGrafter"/>
</dbReference>
<dbReference type="GO" id="GO:0008253">
    <property type="term" value="F:5'-nucleotidase activity"/>
    <property type="evidence" value="ECO:0007669"/>
    <property type="project" value="UniProtKB-UniRule"/>
</dbReference>
<dbReference type="GO" id="GO:0004309">
    <property type="term" value="F:exopolyphosphatase activity"/>
    <property type="evidence" value="ECO:0007669"/>
    <property type="project" value="TreeGrafter"/>
</dbReference>
<dbReference type="GO" id="GO:0046872">
    <property type="term" value="F:metal ion binding"/>
    <property type="evidence" value="ECO:0007669"/>
    <property type="project" value="UniProtKB-UniRule"/>
</dbReference>
<dbReference type="GO" id="GO:0000166">
    <property type="term" value="F:nucleotide binding"/>
    <property type="evidence" value="ECO:0007669"/>
    <property type="project" value="UniProtKB-KW"/>
</dbReference>
<dbReference type="FunFam" id="3.40.1210.10:FF:000001">
    <property type="entry name" value="5'/3'-nucleotidase SurE"/>
    <property type="match status" value="1"/>
</dbReference>
<dbReference type="Gene3D" id="3.40.1210.10">
    <property type="entry name" value="Survival protein SurE-like phosphatase/nucleotidase"/>
    <property type="match status" value="1"/>
</dbReference>
<dbReference type="HAMAP" id="MF_00060">
    <property type="entry name" value="SurE"/>
    <property type="match status" value="1"/>
</dbReference>
<dbReference type="InterPro" id="IPR030048">
    <property type="entry name" value="SurE"/>
</dbReference>
<dbReference type="InterPro" id="IPR002828">
    <property type="entry name" value="SurE-like_Pase/nucleotidase"/>
</dbReference>
<dbReference type="InterPro" id="IPR036523">
    <property type="entry name" value="SurE-like_sf"/>
</dbReference>
<dbReference type="NCBIfam" id="NF001490">
    <property type="entry name" value="PRK00346.1-4"/>
    <property type="match status" value="1"/>
</dbReference>
<dbReference type="NCBIfam" id="TIGR00087">
    <property type="entry name" value="surE"/>
    <property type="match status" value="1"/>
</dbReference>
<dbReference type="PANTHER" id="PTHR30457">
    <property type="entry name" value="5'-NUCLEOTIDASE SURE"/>
    <property type="match status" value="1"/>
</dbReference>
<dbReference type="PANTHER" id="PTHR30457:SF12">
    <property type="entry name" value="5'_3'-NUCLEOTIDASE SURE"/>
    <property type="match status" value="1"/>
</dbReference>
<dbReference type="Pfam" id="PF01975">
    <property type="entry name" value="SurE"/>
    <property type="match status" value="1"/>
</dbReference>
<dbReference type="SUPFAM" id="SSF64167">
    <property type="entry name" value="SurE-like"/>
    <property type="match status" value="1"/>
</dbReference>
<sequence>MRILVTNDDGIHAPGLATLEEIARELSDDVWVVAPESDQSGVSHSLSLNDPLRLRQVSEQRFAVKGTPSDCVILGVRHILGDHGPDLVLSGVNRGQNVAEDVTYSGTIAAAMEGTILGIRSIALSQAYGAGGRGALKWDCARTHGAKVVRKILETGIEPGILVNVNFPDCEPADVQGVAVAAQGFRNQALLSIDARVDGRGNPYFWLAFAKARFEPGHGSDLKAIAEKRISVTPLRLDLTDEPTLTRFAQAFAE</sequence>
<reference key="1">
    <citation type="submission" date="2008-03" db="EMBL/GenBank/DDBJ databases">
        <title>Complete sequence of chromosome of Methylobacterium radiotolerans JCM 2831.</title>
        <authorList>
            <consortium name="US DOE Joint Genome Institute"/>
            <person name="Copeland A."/>
            <person name="Lucas S."/>
            <person name="Lapidus A."/>
            <person name="Glavina del Rio T."/>
            <person name="Dalin E."/>
            <person name="Tice H."/>
            <person name="Bruce D."/>
            <person name="Goodwin L."/>
            <person name="Pitluck S."/>
            <person name="Kiss H."/>
            <person name="Brettin T."/>
            <person name="Detter J.C."/>
            <person name="Han C."/>
            <person name="Kuske C.R."/>
            <person name="Schmutz J."/>
            <person name="Larimer F."/>
            <person name="Land M."/>
            <person name="Hauser L."/>
            <person name="Kyrpides N."/>
            <person name="Mikhailova N."/>
            <person name="Marx C.J."/>
            <person name="Richardson P."/>
        </authorList>
    </citation>
    <scope>NUCLEOTIDE SEQUENCE [LARGE SCALE GENOMIC DNA]</scope>
    <source>
        <strain>ATCC 27329 / DSM 1819 / JCM 2831 / NBRC 15690 / NCIMB 10815 / 0-1</strain>
    </source>
</reference>
<organism>
    <name type="scientific">Methylobacterium radiotolerans (strain ATCC 27329 / DSM 1819 / JCM 2831 / NBRC 15690 / NCIMB 10815 / 0-1)</name>
    <dbReference type="NCBI Taxonomy" id="426355"/>
    <lineage>
        <taxon>Bacteria</taxon>
        <taxon>Pseudomonadati</taxon>
        <taxon>Pseudomonadota</taxon>
        <taxon>Alphaproteobacteria</taxon>
        <taxon>Hyphomicrobiales</taxon>
        <taxon>Methylobacteriaceae</taxon>
        <taxon>Methylobacterium</taxon>
    </lineage>
</organism>
<feature type="chain" id="PRO_1000092019" description="5'-nucleotidase SurE">
    <location>
        <begin position="1"/>
        <end position="254"/>
    </location>
</feature>
<feature type="binding site" evidence="1">
    <location>
        <position position="8"/>
    </location>
    <ligand>
        <name>a divalent metal cation</name>
        <dbReference type="ChEBI" id="CHEBI:60240"/>
    </ligand>
</feature>
<feature type="binding site" evidence="1">
    <location>
        <position position="9"/>
    </location>
    <ligand>
        <name>a divalent metal cation</name>
        <dbReference type="ChEBI" id="CHEBI:60240"/>
    </ligand>
</feature>
<feature type="binding site" evidence="1">
    <location>
        <position position="40"/>
    </location>
    <ligand>
        <name>a divalent metal cation</name>
        <dbReference type="ChEBI" id="CHEBI:60240"/>
    </ligand>
</feature>
<feature type="binding site" evidence="1">
    <location>
        <position position="93"/>
    </location>
    <ligand>
        <name>a divalent metal cation</name>
        <dbReference type="ChEBI" id="CHEBI:60240"/>
    </ligand>
</feature>